<proteinExistence type="inferred from homology"/>
<comment type="function">
    <text evidence="1">Specifically methylates the N7 position of guanine in position 527 of 16S rRNA.</text>
</comment>
<comment type="catalytic activity">
    <reaction evidence="1">
        <text>guanosine(527) in 16S rRNA + S-adenosyl-L-methionine = N(7)-methylguanosine(527) in 16S rRNA + S-adenosyl-L-homocysteine</text>
        <dbReference type="Rhea" id="RHEA:42732"/>
        <dbReference type="Rhea" id="RHEA-COMP:10209"/>
        <dbReference type="Rhea" id="RHEA-COMP:10210"/>
        <dbReference type="ChEBI" id="CHEBI:57856"/>
        <dbReference type="ChEBI" id="CHEBI:59789"/>
        <dbReference type="ChEBI" id="CHEBI:74269"/>
        <dbReference type="ChEBI" id="CHEBI:74480"/>
        <dbReference type="EC" id="2.1.1.170"/>
    </reaction>
</comment>
<comment type="subcellular location">
    <subcellularLocation>
        <location evidence="1">Cytoplasm</location>
    </subcellularLocation>
</comment>
<comment type="similarity">
    <text evidence="1">Belongs to the methyltransferase superfamily. RNA methyltransferase RsmG family.</text>
</comment>
<reference key="1">
    <citation type="journal article" date="2002" name="Proc. Natl. Acad. Sci. U.S.A.">
        <title>The genome sequence of the facultative intracellular pathogen Brucella melitensis.</title>
        <authorList>
            <person name="DelVecchio V.G."/>
            <person name="Kapatral V."/>
            <person name="Redkar R.J."/>
            <person name="Patra G."/>
            <person name="Mujer C."/>
            <person name="Los T."/>
            <person name="Ivanova N."/>
            <person name="Anderson I."/>
            <person name="Bhattacharyya A."/>
            <person name="Lykidis A."/>
            <person name="Reznik G."/>
            <person name="Jablonski L."/>
            <person name="Larsen N."/>
            <person name="D'Souza M."/>
            <person name="Bernal A."/>
            <person name="Mazur M."/>
            <person name="Goltsman E."/>
            <person name="Selkov E."/>
            <person name="Elzer P.H."/>
            <person name="Hagius S."/>
            <person name="O'Callaghan D."/>
            <person name="Letesson J.-J."/>
            <person name="Haselkorn R."/>
            <person name="Kyrpides N.C."/>
            <person name="Overbeek R."/>
        </authorList>
    </citation>
    <scope>NUCLEOTIDE SEQUENCE [LARGE SCALE GENOMIC DNA]</scope>
    <source>
        <strain>ATCC 23456 / CCUG 17765 / NCTC 10094 / 16M</strain>
    </source>
</reference>
<organism>
    <name type="scientific">Brucella melitensis biotype 1 (strain ATCC 23456 / CCUG 17765 / NCTC 10094 / 16M)</name>
    <dbReference type="NCBI Taxonomy" id="224914"/>
    <lineage>
        <taxon>Bacteria</taxon>
        <taxon>Pseudomonadati</taxon>
        <taxon>Pseudomonadota</taxon>
        <taxon>Alphaproteobacteria</taxon>
        <taxon>Hyphomicrobiales</taxon>
        <taxon>Brucellaceae</taxon>
        <taxon>Brucella/Ochrobactrum group</taxon>
        <taxon>Brucella</taxon>
    </lineage>
</organism>
<accession>Q8YJS4</accession>
<sequence>MSADIRFDSLKTIVPAVSRETADRLIAFEDLFRKWSKAINLASPSTLADLWNRHILDSAQLFPLAKEATRWLDIGSGGGFPGIVTACFLAERSGGCIDLVESAGKKAAFLRTAAGHLHVPARVHSARIESMWEKIETPQVVTARALASLGDLFTLAEPWLSDGAKALFQKGRDYQREIDESRVGWSFDLVKHPSAIDQASVILEISNLRRKTD</sequence>
<dbReference type="EC" id="2.1.1.170" evidence="1"/>
<dbReference type="EMBL" id="AE008917">
    <property type="protein sequence ID" value="AAL51190.1"/>
    <property type="molecule type" value="Genomic_DNA"/>
</dbReference>
<dbReference type="PIR" id="AC3253">
    <property type="entry name" value="AC3253"/>
</dbReference>
<dbReference type="RefSeq" id="WP_002967027.1">
    <property type="nucleotide sequence ID" value="NZ_GG703778.1"/>
</dbReference>
<dbReference type="SMR" id="Q8YJS4"/>
<dbReference type="GeneID" id="97534679"/>
<dbReference type="KEGG" id="bme:BMEI0008"/>
<dbReference type="KEGG" id="bmel:DK63_1424"/>
<dbReference type="PATRIC" id="fig|224914.52.peg.1500"/>
<dbReference type="eggNOG" id="COG0357">
    <property type="taxonomic scope" value="Bacteria"/>
</dbReference>
<dbReference type="PhylomeDB" id="Q8YJS4"/>
<dbReference type="Proteomes" id="UP000000419">
    <property type="component" value="Chromosome I"/>
</dbReference>
<dbReference type="GO" id="GO:0005829">
    <property type="term" value="C:cytosol"/>
    <property type="evidence" value="ECO:0007669"/>
    <property type="project" value="TreeGrafter"/>
</dbReference>
<dbReference type="GO" id="GO:0070043">
    <property type="term" value="F:rRNA (guanine-N7-)-methyltransferase activity"/>
    <property type="evidence" value="ECO:0007669"/>
    <property type="project" value="UniProtKB-UniRule"/>
</dbReference>
<dbReference type="Gene3D" id="3.40.50.150">
    <property type="entry name" value="Vaccinia Virus protein VP39"/>
    <property type="match status" value="1"/>
</dbReference>
<dbReference type="HAMAP" id="MF_00074">
    <property type="entry name" value="16SrRNA_methyltr_G"/>
    <property type="match status" value="1"/>
</dbReference>
<dbReference type="InterPro" id="IPR003682">
    <property type="entry name" value="rRNA_ssu_MeTfrase_G"/>
</dbReference>
<dbReference type="InterPro" id="IPR029063">
    <property type="entry name" value="SAM-dependent_MTases_sf"/>
</dbReference>
<dbReference type="NCBIfam" id="TIGR00138">
    <property type="entry name" value="rsmG_gidB"/>
    <property type="match status" value="1"/>
</dbReference>
<dbReference type="PANTHER" id="PTHR31760">
    <property type="entry name" value="S-ADENOSYL-L-METHIONINE-DEPENDENT METHYLTRANSFERASES SUPERFAMILY PROTEIN"/>
    <property type="match status" value="1"/>
</dbReference>
<dbReference type="PANTHER" id="PTHR31760:SF0">
    <property type="entry name" value="S-ADENOSYL-L-METHIONINE-DEPENDENT METHYLTRANSFERASES SUPERFAMILY PROTEIN"/>
    <property type="match status" value="1"/>
</dbReference>
<dbReference type="Pfam" id="PF02527">
    <property type="entry name" value="GidB"/>
    <property type="match status" value="1"/>
</dbReference>
<dbReference type="PIRSF" id="PIRSF003078">
    <property type="entry name" value="GidB"/>
    <property type="match status" value="1"/>
</dbReference>
<dbReference type="SUPFAM" id="SSF53335">
    <property type="entry name" value="S-adenosyl-L-methionine-dependent methyltransferases"/>
    <property type="match status" value="1"/>
</dbReference>
<gene>
    <name evidence="1" type="primary">rsmG</name>
    <name type="ordered locus">BMEI0008</name>
</gene>
<keyword id="KW-0963">Cytoplasm</keyword>
<keyword id="KW-0489">Methyltransferase</keyword>
<keyword id="KW-0698">rRNA processing</keyword>
<keyword id="KW-0949">S-adenosyl-L-methionine</keyword>
<keyword id="KW-0808">Transferase</keyword>
<evidence type="ECO:0000255" key="1">
    <source>
        <dbReference type="HAMAP-Rule" id="MF_00074"/>
    </source>
</evidence>
<feature type="chain" id="PRO_0000184229" description="Ribosomal RNA small subunit methyltransferase G">
    <location>
        <begin position="1"/>
        <end position="213"/>
    </location>
</feature>
<feature type="binding site" evidence="1">
    <location>
        <position position="75"/>
    </location>
    <ligand>
        <name>S-adenosyl-L-methionine</name>
        <dbReference type="ChEBI" id="CHEBI:59789"/>
    </ligand>
</feature>
<feature type="binding site" evidence="1">
    <location>
        <position position="80"/>
    </location>
    <ligand>
        <name>S-adenosyl-L-methionine</name>
        <dbReference type="ChEBI" id="CHEBI:59789"/>
    </ligand>
</feature>
<feature type="binding site" evidence="1">
    <location>
        <begin position="128"/>
        <end position="129"/>
    </location>
    <ligand>
        <name>S-adenosyl-L-methionine</name>
        <dbReference type="ChEBI" id="CHEBI:59789"/>
    </ligand>
</feature>
<feature type="binding site" evidence="1">
    <location>
        <position position="144"/>
    </location>
    <ligand>
        <name>S-adenosyl-L-methionine</name>
        <dbReference type="ChEBI" id="CHEBI:59789"/>
    </ligand>
</feature>
<name>RSMG_BRUME</name>
<protein>
    <recommendedName>
        <fullName evidence="1">Ribosomal RNA small subunit methyltransferase G</fullName>
        <ecNumber evidence="1">2.1.1.170</ecNumber>
    </recommendedName>
    <alternativeName>
        <fullName evidence="1">16S rRNA 7-methylguanosine methyltransferase</fullName>
        <shortName evidence="1">16S rRNA m7G methyltransferase</shortName>
    </alternativeName>
</protein>